<organism>
    <name type="scientific">Staphylococcus aureus</name>
    <dbReference type="NCBI Taxonomy" id="1280"/>
    <lineage>
        <taxon>Bacteria</taxon>
        <taxon>Bacillati</taxon>
        <taxon>Bacillota</taxon>
        <taxon>Bacilli</taxon>
        <taxon>Bacillales</taxon>
        <taxon>Staphylococcaceae</taxon>
        <taxon>Staphylococcus</taxon>
    </lineage>
</organism>
<gene>
    <name evidence="1" type="primary">mraZ</name>
</gene>
<reference key="1">
    <citation type="journal article" date="1997" name="J. Bacteriol.">
        <title>Identification and characterization of cell wall-cell division gene clusters in pathogenic Gram-positive cocci.</title>
        <authorList>
            <person name="Pucci M.J."/>
            <person name="Thanassi J.A."/>
            <person name="Discotto L.F."/>
            <person name="Kessler R.E."/>
            <person name="Dougherty T.J."/>
        </authorList>
    </citation>
    <scope>NUCLEOTIDE SEQUENCE [GENOMIC DNA]</scope>
    <source>
        <strain>ATCC 8325-4</strain>
    </source>
</reference>
<dbReference type="EMBL" id="U94706">
    <property type="protein sequence ID" value="AAC45621.1"/>
    <property type="molecule type" value="Genomic_DNA"/>
</dbReference>
<dbReference type="SMR" id="O07319"/>
<dbReference type="GO" id="GO:0005737">
    <property type="term" value="C:cytoplasm"/>
    <property type="evidence" value="ECO:0007669"/>
    <property type="project" value="UniProtKB-UniRule"/>
</dbReference>
<dbReference type="GO" id="GO:0009295">
    <property type="term" value="C:nucleoid"/>
    <property type="evidence" value="ECO:0007669"/>
    <property type="project" value="UniProtKB-SubCell"/>
</dbReference>
<dbReference type="GO" id="GO:0003700">
    <property type="term" value="F:DNA-binding transcription factor activity"/>
    <property type="evidence" value="ECO:0007669"/>
    <property type="project" value="UniProtKB-UniRule"/>
</dbReference>
<dbReference type="GO" id="GO:0000976">
    <property type="term" value="F:transcription cis-regulatory region binding"/>
    <property type="evidence" value="ECO:0007669"/>
    <property type="project" value="TreeGrafter"/>
</dbReference>
<dbReference type="GO" id="GO:2000143">
    <property type="term" value="P:negative regulation of DNA-templated transcription initiation"/>
    <property type="evidence" value="ECO:0007669"/>
    <property type="project" value="TreeGrafter"/>
</dbReference>
<dbReference type="CDD" id="cd16321">
    <property type="entry name" value="MraZ_C"/>
    <property type="match status" value="1"/>
</dbReference>
<dbReference type="CDD" id="cd16320">
    <property type="entry name" value="MraZ_N"/>
    <property type="match status" value="1"/>
</dbReference>
<dbReference type="FunFam" id="3.40.1550.20:FF:000002">
    <property type="entry name" value="Transcriptional regulator MraZ"/>
    <property type="match status" value="1"/>
</dbReference>
<dbReference type="Gene3D" id="3.40.1550.20">
    <property type="entry name" value="Transcriptional regulator MraZ domain"/>
    <property type="match status" value="1"/>
</dbReference>
<dbReference type="HAMAP" id="MF_01008">
    <property type="entry name" value="MraZ"/>
    <property type="match status" value="1"/>
</dbReference>
<dbReference type="InterPro" id="IPR003444">
    <property type="entry name" value="MraZ"/>
</dbReference>
<dbReference type="InterPro" id="IPR035644">
    <property type="entry name" value="MraZ_C"/>
</dbReference>
<dbReference type="InterPro" id="IPR020603">
    <property type="entry name" value="MraZ_dom"/>
</dbReference>
<dbReference type="InterPro" id="IPR035642">
    <property type="entry name" value="MraZ_N"/>
</dbReference>
<dbReference type="InterPro" id="IPR038619">
    <property type="entry name" value="MraZ_sf"/>
</dbReference>
<dbReference type="InterPro" id="IPR007159">
    <property type="entry name" value="SpoVT-AbrB_dom"/>
</dbReference>
<dbReference type="InterPro" id="IPR037914">
    <property type="entry name" value="SpoVT-AbrB_sf"/>
</dbReference>
<dbReference type="NCBIfam" id="TIGR00242">
    <property type="entry name" value="division/cell wall cluster transcriptional repressor MraZ"/>
    <property type="match status" value="1"/>
</dbReference>
<dbReference type="PANTHER" id="PTHR34701">
    <property type="entry name" value="TRANSCRIPTIONAL REGULATOR MRAZ"/>
    <property type="match status" value="1"/>
</dbReference>
<dbReference type="PANTHER" id="PTHR34701:SF1">
    <property type="entry name" value="TRANSCRIPTIONAL REGULATOR MRAZ"/>
    <property type="match status" value="1"/>
</dbReference>
<dbReference type="Pfam" id="PF02381">
    <property type="entry name" value="MraZ"/>
    <property type="match status" value="2"/>
</dbReference>
<dbReference type="SUPFAM" id="SSF89447">
    <property type="entry name" value="AbrB/MazE/MraZ-like"/>
    <property type="match status" value="1"/>
</dbReference>
<dbReference type="PROSITE" id="PS51740">
    <property type="entry name" value="SPOVT_ABRB"/>
    <property type="match status" value="2"/>
</dbReference>
<sequence length="144" mass="17403">MFMGEYDHQLDTKGRMIIPSKFRYDLNERFIITRGLDKCLFGYTLDEWQQIEEKMKTLPMTKKDARKFMRMFFSGAVEVELDKQGRINIPQNLRKYANLTKECTVIGVSNRIEIWDRETWNDFYERNLKKSFEDIAEDLIDFDF</sequence>
<protein>
    <recommendedName>
        <fullName>Transcriptional regulator MraZ</fullName>
    </recommendedName>
</protein>
<comment type="subunit">
    <text evidence="1">Forms oligomers.</text>
</comment>
<comment type="subcellular location">
    <subcellularLocation>
        <location evidence="1">Cytoplasm</location>
        <location evidence="1">Nucleoid</location>
    </subcellularLocation>
</comment>
<comment type="similarity">
    <text evidence="1">Belongs to the MraZ family.</text>
</comment>
<feature type="chain" id="PRO_0000108544" description="Transcriptional regulator MraZ">
    <location>
        <begin position="1"/>
        <end position="144"/>
    </location>
</feature>
<feature type="domain" description="SpoVT-AbrB 1" evidence="2">
    <location>
        <begin position="5"/>
        <end position="47"/>
    </location>
</feature>
<feature type="domain" description="SpoVT-AbrB 2" evidence="2">
    <location>
        <begin position="76"/>
        <end position="119"/>
    </location>
</feature>
<keyword id="KW-0963">Cytoplasm</keyword>
<keyword id="KW-0238">DNA-binding</keyword>
<keyword id="KW-0677">Repeat</keyword>
<keyword id="KW-0804">Transcription</keyword>
<keyword id="KW-0805">Transcription regulation</keyword>
<proteinExistence type="inferred from homology"/>
<name>MRAZ_STAAU</name>
<evidence type="ECO:0000255" key="1">
    <source>
        <dbReference type="HAMAP-Rule" id="MF_01008"/>
    </source>
</evidence>
<evidence type="ECO:0000255" key="2">
    <source>
        <dbReference type="PROSITE-ProRule" id="PRU01076"/>
    </source>
</evidence>
<accession>O07319</accession>